<organism>
    <name type="scientific">Oryza sativa subsp. japonica</name>
    <name type="common">Rice</name>
    <dbReference type="NCBI Taxonomy" id="39947"/>
    <lineage>
        <taxon>Eukaryota</taxon>
        <taxon>Viridiplantae</taxon>
        <taxon>Streptophyta</taxon>
        <taxon>Embryophyta</taxon>
        <taxon>Tracheophyta</taxon>
        <taxon>Spermatophyta</taxon>
        <taxon>Magnoliopsida</taxon>
        <taxon>Liliopsida</taxon>
        <taxon>Poales</taxon>
        <taxon>Poaceae</taxon>
        <taxon>BOP clade</taxon>
        <taxon>Oryzoideae</taxon>
        <taxon>Oryzeae</taxon>
        <taxon>Oryzinae</taxon>
        <taxon>Oryza</taxon>
        <taxon>Oryza sativa</taxon>
    </lineage>
</organism>
<keyword id="KW-0939">Gibberellin signaling pathway</keyword>
<keyword id="KW-0539">Nucleus</keyword>
<keyword id="KW-1185">Reference proteome</keyword>
<keyword id="KW-0804">Transcription</keyword>
<keyword id="KW-0805">Transcription regulation</keyword>
<dbReference type="EMBL" id="AP004464">
    <property type="protein sequence ID" value="BAD01234.1"/>
    <property type="status" value="ALT_SEQ"/>
    <property type="molecule type" value="Genomic_DNA"/>
</dbReference>
<dbReference type="EMBL" id="AP005439">
    <property type="protein sequence ID" value="BAD13119.1"/>
    <property type="status" value="ALT_SEQ"/>
    <property type="molecule type" value="Genomic_DNA"/>
</dbReference>
<dbReference type="EMBL" id="AP008214">
    <property type="protein sequence ID" value="BAF24279.1"/>
    <property type="status" value="ALT_SEQ"/>
    <property type="molecule type" value="Genomic_DNA"/>
</dbReference>
<dbReference type="EMBL" id="AP014964">
    <property type="protein sequence ID" value="BAT06452.1"/>
    <property type="status" value="ALT_SEQ"/>
    <property type="molecule type" value="Genomic_DNA"/>
</dbReference>
<dbReference type="EMBL" id="CM000145">
    <property type="protein sequence ID" value="EAZ43484.1"/>
    <property type="molecule type" value="Genomic_DNA"/>
</dbReference>
<dbReference type="RefSeq" id="XP_015649580.1">
    <property type="nucleotide sequence ID" value="XM_015794094.1"/>
</dbReference>
<dbReference type="SMR" id="A3BV95"/>
<dbReference type="FunCoup" id="A3BV95">
    <property type="interactions" value="119"/>
</dbReference>
<dbReference type="PaxDb" id="39947-A0A0P0XIW1"/>
<dbReference type="EnsemblPlants" id="Os08t0536800-02">
    <property type="protein sequence ID" value="Os08t0536800-02"/>
    <property type="gene ID" value="Os08g0536800"/>
</dbReference>
<dbReference type="Gramene" id="Os08t0536800-02">
    <property type="protein sequence ID" value="Os08t0536800-02"/>
    <property type="gene ID" value="Os08g0536800"/>
</dbReference>
<dbReference type="KEGG" id="dosa:Os08g0536800"/>
<dbReference type="eggNOG" id="ENOG502R2X6">
    <property type="taxonomic scope" value="Eukaryota"/>
</dbReference>
<dbReference type="HOGENOM" id="CLU_061056_1_0_1"/>
<dbReference type="OrthoDB" id="1928604at2759"/>
<dbReference type="Proteomes" id="UP000000763">
    <property type="component" value="Chromosome 8"/>
</dbReference>
<dbReference type="Proteomes" id="UP000007752">
    <property type="component" value="Chromosome 8"/>
</dbReference>
<dbReference type="Proteomes" id="UP000059680">
    <property type="component" value="Chromosome 8"/>
</dbReference>
<dbReference type="GO" id="GO:0005634">
    <property type="term" value="C:nucleus"/>
    <property type="evidence" value="ECO:0000314"/>
    <property type="project" value="UniProtKB"/>
</dbReference>
<dbReference type="GO" id="GO:0003700">
    <property type="term" value="F:DNA-binding transcription factor activity"/>
    <property type="evidence" value="ECO:0000318"/>
    <property type="project" value="GO_Central"/>
</dbReference>
<dbReference type="GO" id="GO:0046983">
    <property type="term" value="F:protein dimerization activity"/>
    <property type="evidence" value="ECO:0007669"/>
    <property type="project" value="InterPro"/>
</dbReference>
<dbReference type="GO" id="GO:0009740">
    <property type="term" value="P:gibberellic acid mediated signaling pathway"/>
    <property type="evidence" value="ECO:0007669"/>
    <property type="project" value="UniProtKB-KW"/>
</dbReference>
<dbReference type="GO" id="GO:0010372">
    <property type="term" value="P:positive regulation of gibberellin biosynthetic process"/>
    <property type="evidence" value="ECO:0000315"/>
    <property type="project" value="UniProtKB"/>
</dbReference>
<dbReference type="GO" id="GO:0051510">
    <property type="term" value="P:regulation of unidimensional cell growth"/>
    <property type="evidence" value="ECO:0000315"/>
    <property type="project" value="UniProtKB"/>
</dbReference>
<dbReference type="CDD" id="cd18919">
    <property type="entry name" value="bHLH_AtBPE_like"/>
    <property type="match status" value="1"/>
</dbReference>
<dbReference type="FunFam" id="4.10.280.10:FF:000002">
    <property type="entry name" value="Basic helix-loop-helix transcription factor"/>
    <property type="match status" value="1"/>
</dbReference>
<dbReference type="Gene3D" id="4.10.280.10">
    <property type="entry name" value="Helix-loop-helix DNA-binding domain"/>
    <property type="match status" value="1"/>
</dbReference>
<dbReference type="InterPro" id="IPR011598">
    <property type="entry name" value="bHLH_dom"/>
</dbReference>
<dbReference type="InterPro" id="IPR024097">
    <property type="entry name" value="bHLH_ZIP_TF"/>
</dbReference>
<dbReference type="InterPro" id="IPR036638">
    <property type="entry name" value="HLH_DNA-bd_sf"/>
</dbReference>
<dbReference type="PANTHER" id="PTHR12565:SF468">
    <property type="entry name" value="BASIC HELIX-LOOP-HELIX PROTEIN 80"/>
    <property type="match status" value="1"/>
</dbReference>
<dbReference type="PANTHER" id="PTHR12565">
    <property type="entry name" value="STEROL REGULATORY ELEMENT-BINDING PROTEIN"/>
    <property type="match status" value="1"/>
</dbReference>
<dbReference type="Pfam" id="PF00010">
    <property type="entry name" value="HLH"/>
    <property type="match status" value="1"/>
</dbReference>
<dbReference type="SMART" id="SM00353">
    <property type="entry name" value="HLH"/>
    <property type="match status" value="1"/>
</dbReference>
<dbReference type="SUPFAM" id="SSF47459">
    <property type="entry name" value="HLH, helix-loop-helix DNA-binding domain"/>
    <property type="match status" value="1"/>
</dbReference>
<dbReference type="PROSITE" id="PS50888">
    <property type="entry name" value="BHLH"/>
    <property type="match status" value="1"/>
</dbReference>
<reference key="1">
    <citation type="journal article" date="2005" name="Nature">
        <title>The map-based sequence of the rice genome.</title>
        <authorList>
            <consortium name="International rice genome sequencing project (IRGSP)"/>
        </authorList>
    </citation>
    <scope>NUCLEOTIDE SEQUENCE [LARGE SCALE GENOMIC DNA]</scope>
    <source>
        <strain>cv. Nipponbare</strain>
    </source>
</reference>
<reference key="2">
    <citation type="journal article" date="2008" name="Nucleic Acids Res.">
        <title>The rice annotation project database (RAP-DB): 2008 update.</title>
        <authorList>
            <consortium name="The rice annotation project (RAP)"/>
        </authorList>
    </citation>
    <scope>GENOME REANNOTATION</scope>
    <source>
        <strain>cv. Nipponbare</strain>
    </source>
</reference>
<reference key="3">
    <citation type="journal article" date="2013" name="Rice">
        <title>Improvement of the Oryza sativa Nipponbare reference genome using next generation sequence and optical map data.</title>
        <authorList>
            <person name="Kawahara Y."/>
            <person name="de la Bastide M."/>
            <person name="Hamilton J.P."/>
            <person name="Kanamori H."/>
            <person name="McCombie W.R."/>
            <person name="Ouyang S."/>
            <person name="Schwartz D.C."/>
            <person name="Tanaka T."/>
            <person name="Wu J."/>
            <person name="Zhou S."/>
            <person name="Childs K.L."/>
            <person name="Davidson R.M."/>
            <person name="Lin H."/>
            <person name="Quesada-Ocampo L."/>
            <person name="Vaillancourt B."/>
            <person name="Sakai H."/>
            <person name="Lee S.S."/>
            <person name="Kim J."/>
            <person name="Numa H."/>
            <person name="Itoh T."/>
            <person name="Buell C.R."/>
            <person name="Matsumoto T."/>
        </authorList>
    </citation>
    <scope>GENOME REANNOTATION</scope>
    <source>
        <strain>cv. Nipponbare</strain>
    </source>
</reference>
<reference key="4">
    <citation type="journal article" date="2005" name="PLoS Biol.">
        <title>The genomes of Oryza sativa: a history of duplications.</title>
        <authorList>
            <person name="Yu J."/>
            <person name="Wang J."/>
            <person name="Lin W."/>
            <person name="Li S."/>
            <person name="Li H."/>
            <person name="Zhou J."/>
            <person name="Ni P."/>
            <person name="Dong W."/>
            <person name="Hu S."/>
            <person name="Zeng C."/>
            <person name="Zhang J."/>
            <person name="Zhang Y."/>
            <person name="Li R."/>
            <person name="Xu Z."/>
            <person name="Li S."/>
            <person name="Li X."/>
            <person name="Zheng H."/>
            <person name="Cong L."/>
            <person name="Lin L."/>
            <person name="Yin J."/>
            <person name="Geng J."/>
            <person name="Li G."/>
            <person name="Shi J."/>
            <person name="Liu J."/>
            <person name="Lv H."/>
            <person name="Li J."/>
            <person name="Wang J."/>
            <person name="Deng Y."/>
            <person name="Ran L."/>
            <person name="Shi X."/>
            <person name="Wang X."/>
            <person name="Wu Q."/>
            <person name="Li C."/>
            <person name="Ren X."/>
            <person name="Wang J."/>
            <person name="Wang X."/>
            <person name="Li D."/>
            <person name="Liu D."/>
            <person name="Zhang X."/>
            <person name="Ji Z."/>
            <person name="Zhao W."/>
            <person name="Sun Y."/>
            <person name="Zhang Z."/>
            <person name="Bao J."/>
            <person name="Han Y."/>
            <person name="Dong L."/>
            <person name="Ji J."/>
            <person name="Chen P."/>
            <person name="Wu S."/>
            <person name="Liu J."/>
            <person name="Xiao Y."/>
            <person name="Bu D."/>
            <person name="Tan J."/>
            <person name="Yang L."/>
            <person name="Ye C."/>
            <person name="Zhang J."/>
            <person name="Xu J."/>
            <person name="Zhou Y."/>
            <person name="Yu Y."/>
            <person name="Zhang B."/>
            <person name="Zhuang S."/>
            <person name="Wei H."/>
            <person name="Liu B."/>
            <person name="Lei M."/>
            <person name="Yu H."/>
            <person name="Li Y."/>
            <person name="Xu H."/>
            <person name="Wei S."/>
            <person name="He X."/>
            <person name="Fang L."/>
            <person name="Zhang Z."/>
            <person name="Zhang Y."/>
            <person name="Huang X."/>
            <person name="Su Z."/>
            <person name="Tong W."/>
            <person name="Li J."/>
            <person name="Tong Z."/>
            <person name="Li S."/>
            <person name="Ye J."/>
            <person name="Wang L."/>
            <person name="Fang L."/>
            <person name="Lei T."/>
            <person name="Chen C.-S."/>
            <person name="Chen H.-C."/>
            <person name="Xu Z."/>
            <person name="Li H."/>
            <person name="Huang H."/>
            <person name="Zhang F."/>
            <person name="Xu H."/>
            <person name="Li N."/>
            <person name="Zhao C."/>
            <person name="Li S."/>
            <person name="Dong L."/>
            <person name="Huang Y."/>
            <person name="Li L."/>
            <person name="Xi Y."/>
            <person name="Qi Q."/>
            <person name="Li W."/>
            <person name="Zhang B."/>
            <person name="Hu W."/>
            <person name="Zhang Y."/>
            <person name="Tian X."/>
            <person name="Jiao Y."/>
            <person name="Liang X."/>
            <person name="Jin J."/>
            <person name="Gao L."/>
            <person name="Zheng W."/>
            <person name="Hao B."/>
            <person name="Liu S.-M."/>
            <person name="Wang W."/>
            <person name="Yuan L."/>
            <person name="Cao M."/>
            <person name="McDermott J."/>
            <person name="Samudrala R."/>
            <person name="Wang J."/>
            <person name="Wong G.K.-S."/>
            <person name="Yang H."/>
        </authorList>
    </citation>
    <scope>NUCLEOTIDE SEQUENCE [LARGE SCALE GENOMIC DNA]</scope>
    <source>
        <strain>cv. Nipponbare</strain>
    </source>
</reference>
<reference key="5">
    <citation type="journal article" date="2010" name="Plant Physiol.">
        <title>Genome-wide classification and evolutionary analysis of the bHLH family of transcription factors in Arabidopsis, poplar, rice, moss, and algae.</title>
        <authorList>
            <person name="Carretero-Paulet L."/>
            <person name="Galstyan A."/>
            <person name="Roig-Villanova I."/>
            <person name="Martinez-Garcia J.F."/>
            <person name="Bilbao-Castro J.R."/>
            <person name="Robertson D.L."/>
        </authorList>
    </citation>
    <scope>GENE FAMILY</scope>
    <scope>NOMENCLATURE</scope>
</reference>
<reference key="6">
    <citation type="journal article" date="2021" name="Int. J. Mol. Sci.">
        <title>Modulation of Rice Leaf Angle and Grain Size by Expressing OsBCL1 and OsBCL2 under the Control of OsBUL1 Promoter.</title>
        <authorList>
            <person name="Jang S."/>
            <person name="Cho J.-Y."/>
            <person name="Do G.-R."/>
            <person name="Kang Y."/>
            <person name="Li H.-Y."/>
            <person name="Song J."/>
            <person name="Kim H.-Y."/>
            <person name="Kim B.-G."/>
            <person name="Hsing Y.-I."/>
        </authorList>
    </citation>
    <scope>FUNCTION</scope>
    <scope>BIOTECHNOLOGY</scope>
    <scope>TISSUE SPECIFICITY</scope>
    <scope>DEVELOPMENTAL STAGE</scope>
    <scope>SUBCELLULAR LOCATION</scope>
    <scope>INTERACTION WITH IBH1; BC1 AND LO9-177</scope>
    <source>
        <strain>cv. Tainung 67</strain>
    </source>
</reference>
<feature type="chain" id="PRO_0000456869" description="Basic helix-loop-helix protein 80">
    <location>
        <begin position="1"/>
        <end position="291"/>
    </location>
</feature>
<feature type="domain" description="bHLH" evidence="2">
    <location>
        <begin position="129"/>
        <end position="179"/>
    </location>
</feature>
<feature type="region of interest" description="Disordered" evidence="3">
    <location>
        <begin position="65"/>
        <end position="120"/>
    </location>
</feature>
<feature type="region of interest" description="Basic motif; degenerate" evidence="2">
    <location>
        <begin position="129"/>
        <end position="142"/>
    </location>
</feature>
<feature type="region of interest" description="Helix-loop-helix motif" evidence="2">
    <location>
        <begin position="143"/>
        <end position="179"/>
    </location>
</feature>
<feature type="short sequence motif" description="Nuclear localization signal" evidence="1">
    <location>
        <begin position="125"/>
        <end position="132"/>
    </location>
</feature>
<feature type="compositionally biased region" description="Basic and acidic residues" evidence="3">
    <location>
        <begin position="80"/>
        <end position="117"/>
    </location>
</feature>
<gene>
    <name evidence="6" type="primary">BCL1</name>
    <name evidence="5" type="synonym">bHLH080</name>
    <name evidence="7" type="ordered locus">LOC_Os08g42470</name>
    <name evidence="7" type="ordered locus">Os08g0536800</name>
    <name evidence="11" type="ORF">OsJ_28098</name>
    <name evidence="9" type="ORF">OSJNBa0033D24.39</name>
    <name evidence="10" type="ORF">OSNPB_080536800</name>
    <name evidence="8" type="ORF">P0665C04.20</name>
</gene>
<name>BCL1_ORYSJ</name>
<sequence length="291" mass="31606">MADFSPHHSLLLKATAAGAAIATTNDPNISSFFLYNHSHGSQAPQPANAAAAAIVEDASLESSVSAVLDTSPSVDRKRKAAEDSAHSKDSCKDGKSRRGKKASKEVEEKSTTEDEPPKGYIHVRARRGQATDSHSLAERVRRERISERMRMLQALVPGCDKVTGKALILDEIINYVQSLQNQVEFLSMRIASMSPVLYGFGMDSDGLHDQKIGGMFQEALAMPNPVLNQSSPAPSQAIMDTTSTTSYSLQSQHGAISFSQDNGSYLMQAVGEPRQQEMLNQLVFNNMCSFQ</sequence>
<protein>
    <recommendedName>
        <fullName evidence="5">Basic helix-loop-helix protein 80</fullName>
        <shortName evidence="5">OsbHLH080</shortName>
    </recommendedName>
    <alternativeName>
        <fullName evidence="6">Protein BC-like 1</fullName>
        <shortName evidence="6">OsBC1-like1</shortName>
        <shortName evidence="6">OsBCL1</shortName>
    </alternativeName>
</protein>
<evidence type="ECO:0000255" key="1">
    <source>
        <dbReference type="PROSITE-ProRule" id="PRU00768"/>
    </source>
</evidence>
<evidence type="ECO:0000255" key="2">
    <source>
        <dbReference type="PROSITE-ProRule" id="PRU00981"/>
    </source>
</evidence>
<evidence type="ECO:0000256" key="3">
    <source>
        <dbReference type="SAM" id="MobiDB-lite"/>
    </source>
</evidence>
<evidence type="ECO:0000269" key="4">
    <source>
    </source>
</evidence>
<evidence type="ECO:0000303" key="5">
    <source>
    </source>
</evidence>
<evidence type="ECO:0000303" key="6">
    <source>
    </source>
</evidence>
<evidence type="ECO:0000305" key="7"/>
<evidence type="ECO:0000312" key="8">
    <source>
        <dbReference type="EMBL" id="BAD01234.1"/>
    </source>
</evidence>
<evidence type="ECO:0000312" key="9">
    <source>
        <dbReference type="EMBL" id="BAD13119.1"/>
    </source>
</evidence>
<evidence type="ECO:0000312" key="10">
    <source>
        <dbReference type="EMBL" id="BAT06452.1"/>
    </source>
</evidence>
<evidence type="ECO:0000312" key="11">
    <source>
        <dbReference type="EMBL" id="EAZ43484.1"/>
    </source>
</evidence>
<proteinExistence type="evidence at protein level"/>
<accession>A3BV95</accession>
<accession>A0A0P0XIW1</accession>
<accession>Q6Z1F9</accession>
<comment type="function">
    <text evidence="4">Together with BCL2, positive regulator of cell elongation at least partially through increased gibberellic acid (GA) biosynthesis.</text>
</comment>
<comment type="subunit">
    <text evidence="4 7">Homodimer (Probable). Interacts with IBH1, BC1 and LO9-177 (PubMed:34360554).</text>
</comment>
<comment type="subcellular location">
    <subcellularLocation>
        <location evidence="1 2 4">Nucleus</location>
    </subcellularLocation>
</comment>
<comment type="tissue specificity">
    <text evidence="4">Mostly expressed in panicles and stems and, at low levels, in leaves, lamina joints and roots.</text>
</comment>
<comment type="developmental stage">
    <text evidence="4">In inflorescences, observed at the tip of coleoptiles, paleas, lemmas, lodicules, anthers, carpels, receptacles and rudimentary glumes.</text>
</comment>
<comment type="biotechnology">
    <text evidence="4">Plants expressing BCL1 in the lamina joint and the spikelet under the control of BUL1 promoter exhibit increased leaf angle and grain length.</text>
</comment>
<comment type="similarity">
    <text evidence="7">Belongs to the bHLH protein family.</text>
</comment>
<comment type="sequence caution" evidence="7">
    <conflict type="erroneous gene model prediction">
        <sequence resource="EMBL-CDS" id="BAD01234"/>
    </conflict>
</comment>
<comment type="sequence caution" evidence="7">
    <conflict type="erroneous gene model prediction">
        <sequence resource="EMBL-CDS" id="BAD13119"/>
    </conflict>
</comment>
<comment type="sequence caution" evidence="7">
    <conflict type="erroneous gene model prediction">
        <sequence resource="EMBL-CDS" id="BAF24279"/>
    </conflict>
</comment>
<comment type="sequence caution" evidence="7">
    <conflict type="erroneous gene model prediction">
        <sequence resource="EMBL-CDS" id="BAT06452"/>
    </conflict>
</comment>